<organism>
    <name type="scientific">Pseudarthrobacter chlorophenolicus (strain ATCC 700700 / DSM 12829 / CIP 107037 / JCM 12360 / KCTC 9906 / NCIMB 13794 / A6)</name>
    <name type="common">Arthrobacter chlorophenolicus</name>
    <dbReference type="NCBI Taxonomy" id="452863"/>
    <lineage>
        <taxon>Bacteria</taxon>
        <taxon>Bacillati</taxon>
        <taxon>Actinomycetota</taxon>
        <taxon>Actinomycetes</taxon>
        <taxon>Micrococcales</taxon>
        <taxon>Micrococcaceae</taxon>
        <taxon>Pseudarthrobacter</taxon>
    </lineage>
</organism>
<name>UPPP_PSECP</name>
<dbReference type="EC" id="3.6.1.27" evidence="1"/>
<dbReference type="EMBL" id="CP001341">
    <property type="protein sequence ID" value="ACL39885.1"/>
    <property type="molecule type" value="Genomic_DNA"/>
</dbReference>
<dbReference type="RefSeq" id="WP_015937105.1">
    <property type="nucleotide sequence ID" value="NC_011886.1"/>
</dbReference>
<dbReference type="SMR" id="B8H8K7"/>
<dbReference type="STRING" id="452863.Achl_1910"/>
<dbReference type="KEGG" id="ach:Achl_1910"/>
<dbReference type="eggNOG" id="COG1968">
    <property type="taxonomic scope" value="Bacteria"/>
</dbReference>
<dbReference type="HOGENOM" id="CLU_060296_1_0_11"/>
<dbReference type="OrthoDB" id="9808289at2"/>
<dbReference type="Proteomes" id="UP000002505">
    <property type="component" value="Chromosome"/>
</dbReference>
<dbReference type="GO" id="GO:0005886">
    <property type="term" value="C:plasma membrane"/>
    <property type="evidence" value="ECO:0007669"/>
    <property type="project" value="UniProtKB-SubCell"/>
</dbReference>
<dbReference type="GO" id="GO:0050380">
    <property type="term" value="F:undecaprenyl-diphosphatase activity"/>
    <property type="evidence" value="ECO:0007669"/>
    <property type="project" value="UniProtKB-UniRule"/>
</dbReference>
<dbReference type="GO" id="GO:0071555">
    <property type="term" value="P:cell wall organization"/>
    <property type="evidence" value="ECO:0007669"/>
    <property type="project" value="UniProtKB-KW"/>
</dbReference>
<dbReference type="GO" id="GO:0009252">
    <property type="term" value="P:peptidoglycan biosynthetic process"/>
    <property type="evidence" value="ECO:0007669"/>
    <property type="project" value="UniProtKB-KW"/>
</dbReference>
<dbReference type="GO" id="GO:0008360">
    <property type="term" value="P:regulation of cell shape"/>
    <property type="evidence" value="ECO:0007669"/>
    <property type="project" value="UniProtKB-KW"/>
</dbReference>
<dbReference type="GO" id="GO:0046677">
    <property type="term" value="P:response to antibiotic"/>
    <property type="evidence" value="ECO:0007669"/>
    <property type="project" value="UniProtKB-UniRule"/>
</dbReference>
<dbReference type="HAMAP" id="MF_01006">
    <property type="entry name" value="Undec_diphosphatase"/>
    <property type="match status" value="1"/>
</dbReference>
<dbReference type="InterPro" id="IPR003824">
    <property type="entry name" value="UppP"/>
</dbReference>
<dbReference type="NCBIfam" id="NF001392">
    <property type="entry name" value="PRK00281.2-1"/>
    <property type="match status" value="1"/>
</dbReference>
<dbReference type="NCBIfam" id="TIGR00753">
    <property type="entry name" value="undec_PP_bacA"/>
    <property type="match status" value="1"/>
</dbReference>
<dbReference type="PANTHER" id="PTHR30622">
    <property type="entry name" value="UNDECAPRENYL-DIPHOSPHATASE"/>
    <property type="match status" value="1"/>
</dbReference>
<dbReference type="PANTHER" id="PTHR30622:SF4">
    <property type="entry name" value="UNDECAPRENYL-DIPHOSPHATASE"/>
    <property type="match status" value="1"/>
</dbReference>
<dbReference type="Pfam" id="PF02673">
    <property type="entry name" value="BacA"/>
    <property type="match status" value="1"/>
</dbReference>
<protein>
    <recommendedName>
        <fullName evidence="1">Undecaprenyl-diphosphatase</fullName>
        <ecNumber evidence="1">3.6.1.27</ecNumber>
    </recommendedName>
    <alternativeName>
        <fullName evidence="1">Bacitracin resistance protein</fullName>
    </alternativeName>
    <alternativeName>
        <fullName evidence="1">Undecaprenyl pyrophosphate phosphatase</fullName>
    </alternativeName>
</protein>
<sequence>MNWFEVALLGLVQGLTEFLPISSSAHLRIVGQFLPNAEDPGAAFTAITQLGTETAVVVYFWRDIVRIVKAWAGSLAGKVSRQDPDARMGWLVILGSLPIIVLGLLFQDQIESVLRSMWIVATMLIVFGLILAVADAVGKQERDLTQLTYKHGILYGFAQAMALIPGVSRSGGTITAGLLMGYTREAAARYSFLLAIPAVFGSGLYQLYKVVSKDGITGPYGLPETALATVIAFVVGYVIIGWFLKFVSTRSYRLFVWYRIFLGLALYLLLGFGVISA</sequence>
<gene>
    <name evidence="1" type="primary">uppP</name>
    <name type="ordered locus">Achl_1910</name>
</gene>
<evidence type="ECO:0000255" key="1">
    <source>
        <dbReference type="HAMAP-Rule" id="MF_01006"/>
    </source>
</evidence>
<comment type="function">
    <text evidence="1">Catalyzes the dephosphorylation of undecaprenyl diphosphate (UPP). Confers resistance to bacitracin.</text>
</comment>
<comment type="catalytic activity">
    <reaction evidence="1">
        <text>di-trans,octa-cis-undecaprenyl diphosphate + H2O = di-trans,octa-cis-undecaprenyl phosphate + phosphate + H(+)</text>
        <dbReference type="Rhea" id="RHEA:28094"/>
        <dbReference type="ChEBI" id="CHEBI:15377"/>
        <dbReference type="ChEBI" id="CHEBI:15378"/>
        <dbReference type="ChEBI" id="CHEBI:43474"/>
        <dbReference type="ChEBI" id="CHEBI:58405"/>
        <dbReference type="ChEBI" id="CHEBI:60392"/>
        <dbReference type="EC" id="3.6.1.27"/>
    </reaction>
</comment>
<comment type="subcellular location">
    <subcellularLocation>
        <location evidence="1">Cell membrane</location>
        <topology evidence="1">Multi-pass membrane protein</topology>
    </subcellularLocation>
</comment>
<comment type="miscellaneous">
    <text>Bacitracin is thought to be involved in the inhibition of peptidoglycan synthesis by sequestering undecaprenyl diphosphate, thereby reducing the pool of lipid carrier available.</text>
</comment>
<comment type="similarity">
    <text evidence="1">Belongs to the UppP family.</text>
</comment>
<accession>B8H8K7</accession>
<keyword id="KW-0046">Antibiotic resistance</keyword>
<keyword id="KW-1003">Cell membrane</keyword>
<keyword id="KW-0133">Cell shape</keyword>
<keyword id="KW-0961">Cell wall biogenesis/degradation</keyword>
<keyword id="KW-0378">Hydrolase</keyword>
<keyword id="KW-0472">Membrane</keyword>
<keyword id="KW-0573">Peptidoglycan synthesis</keyword>
<keyword id="KW-0812">Transmembrane</keyword>
<keyword id="KW-1133">Transmembrane helix</keyword>
<proteinExistence type="inferred from homology"/>
<reference key="1">
    <citation type="submission" date="2009-01" db="EMBL/GenBank/DDBJ databases">
        <title>Complete sequence of chromosome of Arthrobacter chlorophenolicus A6.</title>
        <authorList>
            <consortium name="US DOE Joint Genome Institute"/>
            <person name="Lucas S."/>
            <person name="Copeland A."/>
            <person name="Lapidus A."/>
            <person name="Glavina del Rio T."/>
            <person name="Tice H."/>
            <person name="Bruce D."/>
            <person name="Goodwin L."/>
            <person name="Pitluck S."/>
            <person name="Goltsman E."/>
            <person name="Clum A."/>
            <person name="Larimer F."/>
            <person name="Land M."/>
            <person name="Hauser L."/>
            <person name="Kyrpides N."/>
            <person name="Mikhailova N."/>
            <person name="Jansson J."/>
            <person name="Richardson P."/>
        </authorList>
    </citation>
    <scope>NUCLEOTIDE SEQUENCE [LARGE SCALE GENOMIC DNA]</scope>
    <source>
        <strain>ATCC 700700 / DSM 12829 / CIP 107037 / JCM 12360 / KCTC 9906 / NCIMB 13794 / A6</strain>
    </source>
</reference>
<feature type="chain" id="PRO_1000148800" description="Undecaprenyl-diphosphatase">
    <location>
        <begin position="1"/>
        <end position="277"/>
    </location>
</feature>
<feature type="transmembrane region" description="Helical" evidence="1">
    <location>
        <begin position="88"/>
        <end position="108"/>
    </location>
</feature>
<feature type="transmembrane region" description="Helical" evidence="1">
    <location>
        <begin position="117"/>
        <end position="137"/>
    </location>
</feature>
<feature type="transmembrane region" description="Helical" evidence="1">
    <location>
        <begin position="157"/>
        <end position="179"/>
    </location>
</feature>
<feature type="transmembrane region" description="Helical" evidence="1">
    <location>
        <begin position="191"/>
        <end position="211"/>
    </location>
</feature>
<feature type="transmembrane region" description="Helical" evidence="1">
    <location>
        <begin position="227"/>
        <end position="247"/>
    </location>
</feature>
<feature type="transmembrane region" description="Helical" evidence="1">
    <location>
        <begin position="255"/>
        <end position="275"/>
    </location>
</feature>